<accession>P18636</accession>
<evidence type="ECO:0000250" key="1"/>
<evidence type="ECO:0000255" key="2"/>
<evidence type="ECO:0000305" key="3"/>
<gene>
    <name type="primary">hupB</name>
    <name type="synonym">hupL</name>
</gene>
<organism>
    <name type="scientific">Rhizobium leguminosarum bv. viciae</name>
    <dbReference type="NCBI Taxonomy" id="387"/>
    <lineage>
        <taxon>Bacteria</taxon>
        <taxon>Pseudomonadati</taxon>
        <taxon>Pseudomonadota</taxon>
        <taxon>Alphaproteobacteria</taxon>
        <taxon>Hyphomicrobiales</taxon>
        <taxon>Rhizobiaceae</taxon>
        <taxon>Rhizobium/Agrobacterium group</taxon>
        <taxon>Rhizobium</taxon>
    </lineage>
</organism>
<keyword id="KW-1003">Cell membrane</keyword>
<keyword id="KW-0472">Membrane</keyword>
<keyword id="KW-0479">Metal-binding</keyword>
<keyword id="KW-0533">Nickel</keyword>
<keyword id="KW-0560">Oxidoreductase</keyword>
<dbReference type="EC" id="1.12.99.6"/>
<dbReference type="EMBL" id="Z36981">
    <property type="protein sequence ID" value="CAA85431.1"/>
    <property type="molecule type" value="Genomic_DNA"/>
</dbReference>
<dbReference type="EMBL" id="X52974">
    <property type="protein sequence ID" value="CAA37149.1"/>
    <property type="molecule type" value="Genomic_DNA"/>
</dbReference>
<dbReference type="PIR" id="S11969">
    <property type="entry name" value="S11969"/>
</dbReference>
<dbReference type="RefSeq" id="WP_018517046.1">
    <property type="nucleotide sequence ID" value="NZ_WIEJ01000010.1"/>
</dbReference>
<dbReference type="SMR" id="P18636"/>
<dbReference type="GO" id="GO:0005886">
    <property type="term" value="C:plasma membrane"/>
    <property type="evidence" value="ECO:0007669"/>
    <property type="project" value="UniProtKB-SubCell"/>
</dbReference>
<dbReference type="GO" id="GO:0008901">
    <property type="term" value="F:ferredoxin hydrogenase activity"/>
    <property type="evidence" value="ECO:0007669"/>
    <property type="project" value="InterPro"/>
</dbReference>
<dbReference type="GO" id="GO:0033748">
    <property type="term" value="F:hydrogenase (acceptor) activity"/>
    <property type="evidence" value="ECO:0007669"/>
    <property type="project" value="UniProtKB-EC"/>
</dbReference>
<dbReference type="GO" id="GO:0016151">
    <property type="term" value="F:nickel cation binding"/>
    <property type="evidence" value="ECO:0007669"/>
    <property type="project" value="InterPro"/>
</dbReference>
<dbReference type="FunFam" id="1.10.645.10:FF:000002">
    <property type="entry name" value="Hydrogenase 2 large subunit"/>
    <property type="match status" value="1"/>
</dbReference>
<dbReference type="Gene3D" id="1.10.645.10">
    <property type="entry name" value="Cytochrome-c3 Hydrogenase, chain B"/>
    <property type="match status" value="1"/>
</dbReference>
<dbReference type="InterPro" id="IPR001501">
    <property type="entry name" value="Ni-dep_hyd_lsu"/>
</dbReference>
<dbReference type="InterPro" id="IPR018194">
    <property type="entry name" value="Ni-dep_hyd_lsu_Ni_BS"/>
</dbReference>
<dbReference type="InterPro" id="IPR029014">
    <property type="entry name" value="NiFe-Hase_large"/>
</dbReference>
<dbReference type="InterPro" id="IPR050867">
    <property type="entry name" value="NiFe/NiFeSe_hydrgnase_LSU"/>
</dbReference>
<dbReference type="PANTHER" id="PTHR42958">
    <property type="entry name" value="HYDROGENASE-2 LARGE CHAIN"/>
    <property type="match status" value="1"/>
</dbReference>
<dbReference type="PANTHER" id="PTHR42958:SF2">
    <property type="entry name" value="UPTAKE HYDROGENASE LARGE SUBUNIT"/>
    <property type="match status" value="1"/>
</dbReference>
<dbReference type="Pfam" id="PF00374">
    <property type="entry name" value="NiFeSe_Hases"/>
    <property type="match status" value="1"/>
</dbReference>
<dbReference type="SUPFAM" id="SSF56762">
    <property type="entry name" value="HydB/Nqo4-like"/>
    <property type="match status" value="1"/>
</dbReference>
<dbReference type="PROSITE" id="PS00507">
    <property type="entry name" value="NI_HGENASE_L_1"/>
    <property type="match status" value="1"/>
</dbReference>
<dbReference type="PROSITE" id="PS00508">
    <property type="entry name" value="NI_HGENASE_L_2"/>
    <property type="match status" value="1"/>
</dbReference>
<feature type="chain" id="PRO_0000199715" description="Uptake hydrogenase large subunit">
    <location>
        <begin position="1"/>
        <end position="596"/>
    </location>
</feature>
<feature type="binding site" evidence="2">
    <location>
        <position position="75"/>
    </location>
    <ligand>
        <name>Ni(2+)</name>
        <dbReference type="ChEBI" id="CHEBI:49786"/>
    </ligand>
</feature>
<feature type="binding site" evidence="2">
    <location>
        <position position="78"/>
    </location>
    <ligand>
        <name>Ni(2+)</name>
        <dbReference type="ChEBI" id="CHEBI:49786"/>
    </ligand>
</feature>
<feature type="binding site" evidence="2">
    <location>
        <position position="575"/>
    </location>
    <ligand>
        <name>Ni(2+)</name>
        <dbReference type="ChEBI" id="CHEBI:49786"/>
    </ligand>
</feature>
<feature type="binding site" evidence="2">
    <location>
        <position position="578"/>
    </location>
    <ligand>
        <name>Ni(2+)</name>
        <dbReference type="ChEBI" id="CHEBI:49786"/>
    </ligand>
</feature>
<feature type="sequence conflict" description="In Ref. 2; CAA37149." evidence="3" ref="2">
    <original>R</original>
    <variation>A</variation>
    <location>
        <position position="510"/>
    </location>
</feature>
<protein>
    <recommendedName>
        <fullName>Uptake hydrogenase large subunit</fullName>
        <ecNumber>1.12.99.6</ecNumber>
    </recommendedName>
    <alternativeName>
        <fullName>Hydrogenlyase</fullName>
    </alternativeName>
    <alternativeName>
        <fullName>Membrane-bound hydrogenase large subunit</fullName>
    </alternativeName>
</protein>
<name>MBHL_RHILV</name>
<reference key="1">
    <citation type="journal article" date="1990" name="Nucleic Acids Res.">
        <title>DNA sequence encoding the two structural genes for the uptake hydrogenase of Rhizobium leguminosarum bv. viciae B10.</title>
        <authorList>
            <person name="Schneider C.G."/>
            <person name="Schmitt H.J."/>
            <person name="Schild C."/>
            <person name="Tichy H.V."/>
            <person name="Lotz W."/>
        </authorList>
    </citation>
    <scope>NUCLEOTIDE SEQUENCE [GENOMIC DNA]</scope>
    <source>
        <strain>B10</strain>
    </source>
</reference>
<reference key="2">
    <citation type="journal article" date="1990" name="Plant Mol. Biol.">
        <title>Nucleotide sequence of the hydrogenase structural genes from Rhizobium leguminosarum.</title>
        <authorList>
            <person name="Hidalgo E."/>
            <person name="Leyva A."/>
            <person name="Ruiz-Argueso T."/>
        </authorList>
    </citation>
    <scope>NUCLEOTIDE SEQUENCE [GENOMIC DNA]</scope>
    <source>
        <strain>128c53</strain>
    </source>
</reference>
<sequence length="596" mass="66193">MTIQTPNGFTLDNSGKRIVVDPVTRIEGHMRVEVNVDENNIIRNAVSTGTMWRGIEVILKNRDPRDAWAFTERICGVCTGTHALTSVRAVENALGITIPDNANSIRNLMQLALQVHDHVVHFYHLHALDWVDVVSALSADPKATSALAQSISDWPLSSPGYFKDIQTRLKKFVESGQLGPFKNGYWGNASYKLPPEANLMAVAHYLEALDFQKEIVKIHTIFGGKNPHPNWLVGGVPCPINVDGTGAVGAINMERLNMVTSIIDQLIEFNDKVYVPDIMAIGSFYKDWLYGGGLSGKNVLAYGDVPEHANDYSEASLKLPRGAIINGNLAEVFPVDHADPEQIQEFVTHSWYKYPDESKGLHPWDGITEPHYELGPNAKGTKTNIEQLDEGAKYSWIKAPRWRGNAMEVGPLARWVIGYAQNKAEFKDPVDKVLKDLGLPVTALFSTLGRTAARALESQWAGYQMRYFQNKLIANIKAGDSNTAFVDKWKPETWPKEVKGVGFTEAPRGRLAHWIRIKDGKIDNYQCVVPTTWNGSPRDPTGNIGAFEASLMDTPMSNPTQPLEILRTIHSFDPCLACSTHVMSPDGQEMARVQVR</sequence>
<comment type="function">
    <text>This enzyme recycles the H(2) produced by nitrogenase to increase the production of ATP and to protect nitrogenase against inhibition or damage by O(2) under carbon- or phosphate-limited conditions.</text>
</comment>
<comment type="catalytic activity">
    <reaction>
        <text>H2 + A = AH2</text>
        <dbReference type="Rhea" id="RHEA:12116"/>
        <dbReference type="ChEBI" id="CHEBI:13193"/>
        <dbReference type="ChEBI" id="CHEBI:17499"/>
        <dbReference type="ChEBI" id="CHEBI:18276"/>
        <dbReference type="EC" id="1.12.99.6"/>
    </reaction>
</comment>
<comment type="cofactor">
    <cofactor evidence="1">
        <name>Ni(2+)</name>
        <dbReference type="ChEBI" id="CHEBI:49786"/>
    </cofactor>
    <text evidence="1">Binds 1 nickel ion per subunit.</text>
</comment>
<comment type="subunit">
    <text>Heterodimer of a large and a small subunit.</text>
</comment>
<comment type="subcellular location">
    <subcellularLocation>
        <location>Cell membrane</location>
        <topology>Peripheral membrane protein</topology>
    </subcellularLocation>
</comment>
<comment type="similarity">
    <text evidence="3">Belongs to the [NiFe]/[NiFeSe] hydrogenase large subunit family.</text>
</comment>
<proteinExistence type="inferred from homology"/>